<reference key="1">
    <citation type="journal article" date="2005" name="J. Bacteriol.">
        <title>Genomic sequence of an otitis media isolate of nontypeable Haemophilus influenzae: comparative study with H. influenzae serotype d, strain KW20.</title>
        <authorList>
            <person name="Harrison A."/>
            <person name="Dyer D.W."/>
            <person name="Gillaspy A."/>
            <person name="Ray W.C."/>
            <person name="Mungur R."/>
            <person name="Carson M.B."/>
            <person name="Zhong H."/>
            <person name="Gipson J."/>
            <person name="Gipson M."/>
            <person name="Johnson L.S."/>
            <person name="Lewis L."/>
            <person name="Bakaletz L.O."/>
            <person name="Munson R.S. Jr."/>
        </authorList>
    </citation>
    <scope>NUCLEOTIDE SEQUENCE [LARGE SCALE GENOMIC DNA]</scope>
    <source>
        <strain>86-028NP</strain>
    </source>
</reference>
<feature type="chain" id="PRO_0000273658" description="Exodeoxyribonuclease 7 large subunit">
    <location>
        <begin position="1"/>
        <end position="439"/>
    </location>
</feature>
<sequence length="439" mass="49417">MSDNIYSVSQLNSAARQMLEGNFSQIWLTGEISNFTQPVSGHWYLTLKDENAQVRCAMFRMKNLRVAFRPQNGMQVLVRANVSLYEPRGDYQLIIDSMHPAGEGLLQQQFEALKMKLAAEGLFAQNLKKTLPHFSKAVGIITSSTGAALQDILHILARRDPSLKVVIYPTAVQGKEATAEIVQMIELANARQEVDVLIVGRGGGSLEDLWCFNEEEVARAIFRSTLPIISAVGHETDVTIADFVADLRAPTPSAAAELVSRNQDELLQQLRHQQQRLDMAFDRLFTRKSQRLKQLALRLQNQHPQNQLRAQQAKNEQLTHRLQLAILRQFENTQQKFTALSVRLKQNPLPYRIQRYQQGLEQLKVRLNFCVNRQVTERQNKLATLCGKLDGLSPLKVLARGYSIAENPQGKAIVSVKDVNQGDFITTQVADGKIVSKVL</sequence>
<gene>
    <name evidence="1" type="primary">xseA</name>
    <name type="ordered locus">NTHI0518</name>
</gene>
<organism>
    <name type="scientific">Haemophilus influenzae (strain 86-028NP)</name>
    <dbReference type="NCBI Taxonomy" id="281310"/>
    <lineage>
        <taxon>Bacteria</taxon>
        <taxon>Pseudomonadati</taxon>
        <taxon>Pseudomonadota</taxon>
        <taxon>Gammaproteobacteria</taxon>
        <taxon>Pasteurellales</taxon>
        <taxon>Pasteurellaceae</taxon>
        <taxon>Haemophilus</taxon>
    </lineage>
</organism>
<evidence type="ECO:0000255" key="1">
    <source>
        <dbReference type="HAMAP-Rule" id="MF_00378"/>
    </source>
</evidence>
<proteinExistence type="inferred from homology"/>
<accession>Q4QNE5</accession>
<name>EX7L_HAEI8</name>
<dbReference type="EC" id="3.1.11.6" evidence="1"/>
<dbReference type="EMBL" id="CP000057">
    <property type="protein sequence ID" value="AAX87452.1"/>
    <property type="molecule type" value="Genomic_DNA"/>
</dbReference>
<dbReference type="RefSeq" id="WP_011272023.1">
    <property type="nucleotide sequence ID" value="NC_007146.2"/>
</dbReference>
<dbReference type="SMR" id="Q4QNE5"/>
<dbReference type="KEGG" id="hit:NTHI0518"/>
<dbReference type="HOGENOM" id="CLU_023625_3_1_6"/>
<dbReference type="Proteomes" id="UP000002525">
    <property type="component" value="Chromosome"/>
</dbReference>
<dbReference type="GO" id="GO:0005737">
    <property type="term" value="C:cytoplasm"/>
    <property type="evidence" value="ECO:0007669"/>
    <property type="project" value="UniProtKB-SubCell"/>
</dbReference>
<dbReference type="GO" id="GO:0009318">
    <property type="term" value="C:exodeoxyribonuclease VII complex"/>
    <property type="evidence" value="ECO:0007669"/>
    <property type="project" value="InterPro"/>
</dbReference>
<dbReference type="GO" id="GO:0008855">
    <property type="term" value="F:exodeoxyribonuclease VII activity"/>
    <property type="evidence" value="ECO:0007669"/>
    <property type="project" value="UniProtKB-UniRule"/>
</dbReference>
<dbReference type="GO" id="GO:0003676">
    <property type="term" value="F:nucleic acid binding"/>
    <property type="evidence" value="ECO:0007669"/>
    <property type="project" value="InterPro"/>
</dbReference>
<dbReference type="GO" id="GO:0006308">
    <property type="term" value="P:DNA catabolic process"/>
    <property type="evidence" value="ECO:0007669"/>
    <property type="project" value="UniProtKB-UniRule"/>
</dbReference>
<dbReference type="CDD" id="cd04489">
    <property type="entry name" value="ExoVII_LU_OBF"/>
    <property type="match status" value="1"/>
</dbReference>
<dbReference type="HAMAP" id="MF_00378">
    <property type="entry name" value="Exonuc_7_L"/>
    <property type="match status" value="1"/>
</dbReference>
<dbReference type="InterPro" id="IPR003753">
    <property type="entry name" value="Exonuc_VII_L"/>
</dbReference>
<dbReference type="InterPro" id="IPR020579">
    <property type="entry name" value="Exonuc_VII_lsu_C"/>
</dbReference>
<dbReference type="InterPro" id="IPR025824">
    <property type="entry name" value="OB-fold_nuc-bd_dom"/>
</dbReference>
<dbReference type="NCBIfam" id="TIGR00237">
    <property type="entry name" value="xseA"/>
    <property type="match status" value="1"/>
</dbReference>
<dbReference type="PANTHER" id="PTHR30008">
    <property type="entry name" value="EXODEOXYRIBONUCLEASE 7 LARGE SUBUNIT"/>
    <property type="match status" value="1"/>
</dbReference>
<dbReference type="PANTHER" id="PTHR30008:SF0">
    <property type="entry name" value="EXODEOXYRIBONUCLEASE 7 LARGE SUBUNIT"/>
    <property type="match status" value="1"/>
</dbReference>
<dbReference type="Pfam" id="PF02601">
    <property type="entry name" value="Exonuc_VII_L"/>
    <property type="match status" value="1"/>
</dbReference>
<dbReference type="Pfam" id="PF13742">
    <property type="entry name" value="tRNA_anti_2"/>
    <property type="match status" value="1"/>
</dbReference>
<keyword id="KW-0963">Cytoplasm</keyword>
<keyword id="KW-0269">Exonuclease</keyword>
<keyword id="KW-0378">Hydrolase</keyword>
<keyword id="KW-0540">Nuclease</keyword>
<comment type="function">
    <text evidence="1">Bidirectionally degrades single-stranded DNA into large acid-insoluble oligonucleotides, which are then degraded further into small acid-soluble oligonucleotides.</text>
</comment>
<comment type="catalytic activity">
    <reaction evidence="1">
        <text>Exonucleolytic cleavage in either 5'- to 3'- or 3'- to 5'-direction to yield nucleoside 5'-phosphates.</text>
        <dbReference type="EC" id="3.1.11.6"/>
    </reaction>
</comment>
<comment type="subunit">
    <text evidence="1">Heterooligomer composed of large and small subunits.</text>
</comment>
<comment type="subcellular location">
    <subcellularLocation>
        <location evidence="1">Cytoplasm</location>
    </subcellularLocation>
</comment>
<comment type="similarity">
    <text evidence="1">Belongs to the XseA family.</text>
</comment>
<protein>
    <recommendedName>
        <fullName evidence="1">Exodeoxyribonuclease 7 large subunit</fullName>
        <ecNumber evidence="1">3.1.11.6</ecNumber>
    </recommendedName>
    <alternativeName>
        <fullName evidence="1">Exodeoxyribonuclease VII large subunit</fullName>
        <shortName evidence="1">Exonuclease VII large subunit</shortName>
    </alternativeName>
</protein>